<proteinExistence type="evidence at transcript level"/>
<keyword id="KW-0010">Activator</keyword>
<keyword id="KW-0238">DNA-binding</keyword>
<keyword id="KW-0539">Nucleus</keyword>
<keyword id="KW-1185">Reference proteome</keyword>
<keyword id="KW-0677">Repeat</keyword>
<keyword id="KW-0804">Transcription</keyword>
<keyword id="KW-0805">Transcription regulation</keyword>
<reference key="1">
    <citation type="journal article" date="2009" name="Science">
        <title>The B73 maize genome: complexity, diversity, and dynamics.</title>
        <authorList>
            <person name="Schnable P.S."/>
            <person name="Ware D."/>
            <person name="Fulton R.S."/>
            <person name="Stein J.C."/>
            <person name="Wei F."/>
            <person name="Pasternak S."/>
            <person name="Liang C."/>
            <person name="Zhang J."/>
            <person name="Fulton L."/>
            <person name="Graves T.A."/>
            <person name="Minx P."/>
            <person name="Reily A.D."/>
            <person name="Courtney L."/>
            <person name="Kruchowski S.S."/>
            <person name="Tomlinson C."/>
            <person name="Strong C."/>
            <person name="Delehaunty K."/>
            <person name="Fronick C."/>
            <person name="Courtney B."/>
            <person name="Rock S.M."/>
            <person name="Belter E."/>
            <person name="Du F."/>
            <person name="Kim K."/>
            <person name="Abbott R.M."/>
            <person name="Cotton M."/>
            <person name="Levy A."/>
            <person name="Marchetto P."/>
            <person name="Ochoa K."/>
            <person name="Jackson S.M."/>
            <person name="Gillam B."/>
            <person name="Chen W."/>
            <person name="Yan L."/>
            <person name="Higginbotham J."/>
            <person name="Cardenas M."/>
            <person name="Waligorski J."/>
            <person name="Applebaum E."/>
            <person name="Phelps L."/>
            <person name="Falcone J."/>
            <person name="Kanchi K."/>
            <person name="Thane T."/>
            <person name="Scimone A."/>
            <person name="Thane N."/>
            <person name="Henke J."/>
            <person name="Wang T."/>
            <person name="Ruppert J."/>
            <person name="Shah N."/>
            <person name="Rotter K."/>
            <person name="Hodges J."/>
            <person name="Ingenthron E."/>
            <person name="Cordes M."/>
            <person name="Kohlberg S."/>
            <person name="Sgro J."/>
            <person name="Delgado B."/>
            <person name="Mead K."/>
            <person name="Chinwalla A."/>
            <person name="Leonard S."/>
            <person name="Crouse K."/>
            <person name="Collura K."/>
            <person name="Kudrna D."/>
            <person name="Currie J."/>
            <person name="He R."/>
            <person name="Angelova A."/>
            <person name="Rajasekar S."/>
            <person name="Mueller T."/>
            <person name="Lomeli R."/>
            <person name="Scara G."/>
            <person name="Ko A."/>
            <person name="Delaney K."/>
            <person name="Wissotski M."/>
            <person name="Lopez G."/>
            <person name="Campos D."/>
            <person name="Braidotti M."/>
            <person name="Ashley E."/>
            <person name="Golser W."/>
            <person name="Kim H."/>
            <person name="Lee S."/>
            <person name="Lin J."/>
            <person name="Dujmic Z."/>
            <person name="Kim W."/>
            <person name="Talag J."/>
            <person name="Zuccolo A."/>
            <person name="Fan C."/>
            <person name="Sebastian A."/>
            <person name="Kramer M."/>
            <person name="Spiegel L."/>
            <person name="Nascimento L."/>
            <person name="Zutavern T."/>
            <person name="Miller B."/>
            <person name="Ambroise C."/>
            <person name="Muller S."/>
            <person name="Spooner W."/>
            <person name="Narechania A."/>
            <person name="Ren L."/>
            <person name="Wei S."/>
            <person name="Kumari S."/>
            <person name="Faga B."/>
            <person name="Levy M.J."/>
            <person name="McMahan L."/>
            <person name="Van Buren P."/>
            <person name="Vaughn M.W."/>
            <person name="Ying K."/>
            <person name="Yeh C.-T."/>
            <person name="Emrich S.J."/>
            <person name="Jia Y."/>
            <person name="Kalyanaraman A."/>
            <person name="Hsia A.-P."/>
            <person name="Barbazuk W.B."/>
            <person name="Baucom R.S."/>
            <person name="Brutnell T.P."/>
            <person name="Carpita N.C."/>
            <person name="Chaparro C."/>
            <person name="Chia J.-M."/>
            <person name="Deragon J.-M."/>
            <person name="Estill J.C."/>
            <person name="Fu Y."/>
            <person name="Jeddeloh J.A."/>
            <person name="Han Y."/>
            <person name="Lee H."/>
            <person name="Li P."/>
            <person name="Lisch D.R."/>
            <person name="Liu S."/>
            <person name="Liu Z."/>
            <person name="Nagel D.H."/>
            <person name="McCann M.C."/>
            <person name="SanMiguel P."/>
            <person name="Myers A.M."/>
            <person name="Nettleton D."/>
            <person name="Nguyen J."/>
            <person name="Penning B.W."/>
            <person name="Ponnala L."/>
            <person name="Schneider K.L."/>
            <person name="Schwartz D.C."/>
            <person name="Sharma A."/>
            <person name="Soderlund C."/>
            <person name="Springer N.M."/>
            <person name="Sun Q."/>
            <person name="Wang H."/>
            <person name="Waterman M."/>
            <person name="Westerman R."/>
            <person name="Wolfgruber T.K."/>
            <person name="Yang L."/>
            <person name="Yu Y."/>
            <person name="Zhang L."/>
            <person name="Zhou S."/>
            <person name="Zhu Q."/>
            <person name="Bennetzen J.L."/>
            <person name="Dawe R.K."/>
            <person name="Jiang J."/>
            <person name="Jiang N."/>
            <person name="Presting G.G."/>
            <person name="Wessler S.R."/>
            <person name="Aluru S."/>
            <person name="Martienssen R.A."/>
            <person name="Clifton S.W."/>
            <person name="McCombie W.R."/>
            <person name="Wing R.A."/>
            <person name="Wilson R.K."/>
        </authorList>
    </citation>
    <scope>NUCLEOTIDE SEQUENCE [LARGE SCALE GENOMIC DNA]</scope>
    <source>
        <strain>cv. B73</strain>
    </source>
</reference>
<reference key="2">
    <citation type="journal article" date="2018" name="Nat. Genet.">
        <title>Extensive intraspecific gene order and gene structural variations between Mo17 and other maize genomes.</title>
        <authorList>
            <person name="Sun S."/>
            <person name="Zhou Y."/>
            <person name="Chen J."/>
            <person name="Shi J."/>
            <person name="Zhao H."/>
            <person name="Zhao H."/>
            <person name="Song W."/>
            <person name="Zhang M."/>
            <person name="Cui Y."/>
            <person name="Dong X."/>
            <person name="Liu H."/>
            <person name="Ma X."/>
            <person name="Jiao Y."/>
            <person name="Wang B."/>
            <person name="Wei X."/>
            <person name="Stein J.C."/>
            <person name="Glaubitz J.C."/>
            <person name="Lu F."/>
            <person name="Yu G."/>
            <person name="Liang C."/>
            <person name="Fengler K."/>
            <person name="Li B."/>
            <person name="Rafalski A."/>
            <person name="Schnable P.S."/>
            <person name="Ware D.H."/>
            <person name="Buckler E.S."/>
            <person name="Lai J."/>
        </authorList>
    </citation>
    <scope>NUCLEOTIDE SEQUENCE [LARGE SCALE GENOMIC DNA]</scope>
    <source>
        <strain>cv. Missouri 17</strain>
        <tissue>Seedling</tissue>
    </source>
</reference>
<reference key="3">
    <citation type="journal article" date="2014" name="Plant J.">
        <title>The Maize TFome--development of a transcription factor open reading frame collection for functional genomics.</title>
        <authorList>
            <person name="Burdo B."/>
            <person name="Gray J."/>
            <person name="Goetting-Minesky M.P."/>
            <person name="Wittler B."/>
            <person name="Hunt M."/>
            <person name="Li T."/>
            <person name="Velliquette D."/>
            <person name="Thomas J."/>
            <person name="Gentzel I."/>
            <person name="dos Santos Brito M."/>
            <person name="Mejia-Guerra M.K."/>
            <person name="Connolly L.N."/>
            <person name="Qaisi D."/>
            <person name="Li W."/>
            <person name="Casas M.I."/>
            <person name="Doseff A.I."/>
            <person name="Grotewold E."/>
        </authorList>
    </citation>
    <scope>NUCLEOTIDE SEQUENCE [LARGE SCALE MRNA]</scope>
    <source>
        <strain>cv. B73</strain>
    </source>
</reference>
<reference key="4">
    <citation type="journal article" date="2022" name="Plant Physiol.">
        <title>The transcription factor ZmMYB69 represses lignin biosynthesis by activating ZmMYB31/42 expression in maize.</title>
        <authorList>
            <person name="Qiang Z."/>
            <person name="Sun H."/>
            <person name="Ge F."/>
            <person name="Li W."/>
            <person name="Li C."/>
            <person name="Wang S."/>
            <person name="Zhang B."/>
            <person name="Zhu L."/>
            <person name="Zhang S."/>
            <person name="Wang X."/>
            <person name="Lai J."/>
            <person name="Qin F."/>
            <person name="Zhou Y."/>
            <person name="Fu Y."/>
        </authorList>
    </citation>
    <scope>FUNCTION</scope>
    <scope>DISRUPTION PHENOTYPE</scope>
    <scope>TISSUE SPECIFICITY</scope>
    <scope>SUBCELLULAR LOCATION</scope>
</reference>
<dbReference type="EMBL" id="CM000786">
    <property type="protein sequence ID" value="AQK38842.1"/>
    <property type="molecule type" value="Genomic_DNA"/>
</dbReference>
<dbReference type="EMBL" id="NCVQ01000002">
    <property type="protein sequence ID" value="PWZ43650.1"/>
    <property type="molecule type" value="Genomic_DNA"/>
</dbReference>
<dbReference type="EMBL" id="KJ728308">
    <property type="protein sequence ID" value="AIB05799.1"/>
    <property type="molecule type" value="mRNA"/>
</dbReference>
<dbReference type="SMR" id="K7TLS0"/>
<dbReference type="STRING" id="4577.K7TLS0"/>
<dbReference type="PaxDb" id="4577-AC197146.3_FGP002"/>
<dbReference type="EnsemblPlants" id="Zm00001eb405450_T001">
    <property type="protein sequence ID" value="Zm00001eb405450_P001"/>
    <property type="gene ID" value="Zm00001eb405450"/>
</dbReference>
<dbReference type="Gramene" id="Zm00001eb405450_T001">
    <property type="protein sequence ID" value="Zm00001eb405450_P001"/>
    <property type="gene ID" value="Zm00001eb405450"/>
</dbReference>
<dbReference type="eggNOG" id="KOG0048">
    <property type="taxonomic scope" value="Eukaryota"/>
</dbReference>
<dbReference type="HOGENOM" id="CLU_028567_6_0_1"/>
<dbReference type="InParanoid" id="K7TLS0"/>
<dbReference type="OMA" id="NGFMMKS"/>
<dbReference type="OrthoDB" id="2143914at2759"/>
<dbReference type="Proteomes" id="UP000007305">
    <property type="component" value="Chromosome 10"/>
</dbReference>
<dbReference type="Proteomes" id="UP000251960">
    <property type="component" value="Chromosome 10"/>
</dbReference>
<dbReference type="ExpressionAtlas" id="K7TLS0">
    <property type="expression patterns" value="baseline and differential"/>
</dbReference>
<dbReference type="GO" id="GO:0005634">
    <property type="term" value="C:nucleus"/>
    <property type="evidence" value="ECO:0000314"/>
    <property type="project" value="UniProtKB"/>
</dbReference>
<dbReference type="GO" id="GO:0003700">
    <property type="term" value="F:DNA-binding transcription factor activity"/>
    <property type="evidence" value="ECO:0000314"/>
    <property type="project" value="UniProtKB"/>
</dbReference>
<dbReference type="GO" id="GO:0043565">
    <property type="term" value="F:sequence-specific DNA binding"/>
    <property type="evidence" value="ECO:0000314"/>
    <property type="project" value="UniProtKB"/>
</dbReference>
<dbReference type="GO" id="GO:0000976">
    <property type="term" value="F:transcription cis-regulatory region binding"/>
    <property type="evidence" value="ECO:0000314"/>
    <property type="project" value="UniProtKB"/>
</dbReference>
<dbReference type="GO" id="GO:0045893">
    <property type="term" value="P:positive regulation of DNA-templated transcription"/>
    <property type="evidence" value="ECO:0000314"/>
    <property type="project" value="UniProtKB"/>
</dbReference>
<dbReference type="GO" id="GO:1901141">
    <property type="term" value="P:regulation of lignin biosynthetic process"/>
    <property type="evidence" value="ECO:0000315"/>
    <property type="project" value="UniProtKB"/>
</dbReference>
<dbReference type="GO" id="GO:0009733">
    <property type="term" value="P:response to auxin"/>
    <property type="evidence" value="ECO:0000318"/>
    <property type="project" value="GO_Central"/>
</dbReference>
<dbReference type="CDD" id="cd00167">
    <property type="entry name" value="SANT"/>
    <property type="match status" value="2"/>
</dbReference>
<dbReference type="FunFam" id="1.10.10.60:FF:000328">
    <property type="entry name" value="MYB transcription factor"/>
    <property type="match status" value="1"/>
</dbReference>
<dbReference type="FunFam" id="1.10.10.60:FF:000001">
    <property type="entry name" value="MYB-related transcription factor"/>
    <property type="match status" value="1"/>
</dbReference>
<dbReference type="Gene3D" id="1.10.10.60">
    <property type="entry name" value="Homeodomain-like"/>
    <property type="match status" value="2"/>
</dbReference>
<dbReference type="InterPro" id="IPR009057">
    <property type="entry name" value="Homeodomain-like_sf"/>
</dbReference>
<dbReference type="InterPro" id="IPR017930">
    <property type="entry name" value="Myb_dom"/>
</dbReference>
<dbReference type="InterPro" id="IPR015495">
    <property type="entry name" value="Myb_TF_plants"/>
</dbReference>
<dbReference type="InterPro" id="IPR001005">
    <property type="entry name" value="SANT/Myb"/>
</dbReference>
<dbReference type="PANTHER" id="PTHR10641">
    <property type="entry name" value="MYB FAMILY TRANSCRIPTION FACTOR"/>
    <property type="match status" value="1"/>
</dbReference>
<dbReference type="PANTHER" id="PTHR10641:SF1397">
    <property type="entry name" value="MYB TRANSCRIPTION FACTOR 69"/>
    <property type="match status" value="1"/>
</dbReference>
<dbReference type="Pfam" id="PF00249">
    <property type="entry name" value="Myb_DNA-binding"/>
    <property type="match status" value="2"/>
</dbReference>
<dbReference type="SMART" id="SM00717">
    <property type="entry name" value="SANT"/>
    <property type="match status" value="2"/>
</dbReference>
<dbReference type="SUPFAM" id="SSF46689">
    <property type="entry name" value="Homeodomain-like"/>
    <property type="match status" value="1"/>
</dbReference>
<dbReference type="PROSITE" id="PS51294">
    <property type="entry name" value="HTH_MYB"/>
    <property type="match status" value="2"/>
</dbReference>
<dbReference type="PROSITE" id="PS50090">
    <property type="entry name" value="MYB_LIKE"/>
    <property type="match status" value="2"/>
</dbReference>
<accession>K7TLS0</accession>
<accession>A0A3L6G5G9</accession>
<organism>
    <name type="scientific">Zea mays</name>
    <name type="common">Maize</name>
    <dbReference type="NCBI Taxonomy" id="4577"/>
    <lineage>
        <taxon>Eukaryota</taxon>
        <taxon>Viridiplantae</taxon>
        <taxon>Streptophyta</taxon>
        <taxon>Embryophyta</taxon>
        <taxon>Tracheophyta</taxon>
        <taxon>Spermatophyta</taxon>
        <taxon>Magnoliopsida</taxon>
        <taxon>Liliopsida</taxon>
        <taxon>Poales</taxon>
        <taxon>Poaceae</taxon>
        <taxon>PACMAD clade</taxon>
        <taxon>Panicoideae</taxon>
        <taxon>Andropogonodae</taxon>
        <taxon>Andropogoneae</taxon>
        <taxon>Tripsacinae</taxon>
        <taxon>Zea</taxon>
    </lineage>
</organism>
<feature type="chain" id="PRO_0000457113" description="MYB transcription factor 69">
    <location>
        <begin position="1"/>
        <end position="289"/>
    </location>
</feature>
<feature type="domain" description="HTH myb-type 1" evidence="1">
    <location>
        <begin position="9"/>
        <end position="61"/>
    </location>
</feature>
<feature type="domain" description="HTH myb-type 2" evidence="1">
    <location>
        <begin position="62"/>
        <end position="116"/>
    </location>
</feature>
<feature type="DNA-binding region" description="H-T-H motif" evidence="1">
    <location>
        <begin position="37"/>
        <end position="61"/>
    </location>
</feature>
<feature type="DNA-binding region" description="H-T-H motif" evidence="1">
    <location>
        <begin position="89"/>
        <end position="112"/>
    </location>
</feature>
<feature type="region of interest" description="Disordered" evidence="2">
    <location>
        <begin position="127"/>
        <end position="162"/>
    </location>
</feature>
<feature type="region of interest" description="Disordered" evidence="2">
    <location>
        <begin position="225"/>
        <end position="252"/>
    </location>
</feature>
<feature type="compositionally biased region" description="Basic and acidic residues" evidence="2">
    <location>
        <begin position="139"/>
        <end position="154"/>
    </location>
</feature>
<feature type="sequence conflict" description="In Ref. 2; PWZ43650." evidence="6" ref="2">
    <original>R</original>
    <variation>P</variation>
    <location>
        <position position="130"/>
    </location>
</feature>
<feature type="sequence conflict" description="In Ref. 2; PWZ43650." evidence="6" ref="2">
    <original>T</original>
    <variation>A</variation>
    <location>
        <position position="147"/>
    </location>
</feature>
<feature type="sequence conflict" description="In Ref. 2; PWZ43650." evidence="6" ref="2">
    <original>ACP</original>
    <variation>CL</variation>
    <location>
        <begin position="156"/>
        <end position="158"/>
    </location>
</feature>
<feature type="sequence conflict" description="In Ref. 2; PWZ43650." evidence="6" ref="2">
    <location>
        <position position="207"/>
    </location>
</feature>
<feature type="sequence conflict" description="In Ref. 2; PWZ43650." evidence="6" ref="2">
    <original>A</original>
    <variation>L</variation>
    <location>
        <position position="241"/>
    </location>
</feature>
<feature type="sequence conflict" description="In Ref. 2; PWZ43650." evidence="6" ref="2">
    <original>R</original>
    <variation>RQ</variation>
    <location>
        <position position="248"/>
    </location>
</feature>
<feature type="sequence conflict" description="In Ref. 2; PWZ43650." evidence="6" ref="2">
    <original>L</original>
    <variation>V</variation>
    <location>
        <position position="269"/>
    </location>
</feature>
<comment type="function">
    <text evidence="3">Transcription factor that binds to the promoter of MYB31 and MYB42 and activates directly their expression, thus repressing lignin biosynthesis.</text>
</comment>
<comment type="subcellular location">
    <subcellularLocation>
        <location evidence="1 3">Nucleus</location>
    </subcellularLocation>
</comment>
<comment type="tissue specificity">
    <text evidence="3">Mainly expressed in highly lignified tissues such as vascular tissues.</text>
</comment>
<comment type="disruption phenotype">
    <text evidence="3">No visible growth defect but increased cell walls thickness and higher lignin content.</text>
</comment>
<comment type="online information" name="https://grassius.org/tfomecollection.php">
    <link uri="https://grassius.org/tfomeinfor.php?clone=pUT6588"/>
</comment>
<gene>
    <name evidence="4" type="primary">MYB69</name>
    <name evidence="5" type="synonym">MYB306_2</name>
    <name evidence="7" type="ORF">ZEAMMB73_Zm00001d023282</name>
    <name evidence="8" type="ORF">Zm00014a_033985</name>
</gene>
<name>MYB69_MAIZE</name>
<evidence type="ECO:0000255" key="1">
    <source>
        <dbReference type="PROSITE-ProRule" id="PRU00625"/>
    </source>
</evidence>
<evidence type="ECO:0000256" key="2">
    <source>
        <dbReference type="SAM" id="MobiDB-lite"/>
    </source>
</evidence>
<evidence type="ECO:0000269" key="3">
    <source>
    </source>
</evidence>
<evidence type="ECO:0000303" key="4">
    <source>
    </source>
</evidence>
<evidence type="ECO:0000303" key="5">
    <source>
    </source>
</evidence>
<evidence type="ECO:0000305" key="6"/>
<evidence type="ECO:0000312" key="7">
    <source>
        <dbReference type="EMBL" id="AQK38842.1"/>
    </source>
</evidence>
<evidence type="ECO:0000312" key="8">
    <source>
        <dbReference type="EMBL" id="PWZ43650.1"/>
    </source>
</evidence>
<sequence length="289" mass="31778">MGRPPCCDKAGVKKGPWTPEEDIVLVSYVQEHGPGNWRAVPVSTGLMRCSKSCRLRWTNYLRPGIRRGNFTPHEEGIIVHLQALLGNRWAAIASYLPQRTDNDIKNYWNTHLKKKLRKQQAIGAIFAPPRPSEPTAGHADCRRHDMTRSSKDSHAACPADSTPAADEVVTQLIAQQFAATDGDTSSSSSYSYASSTDNISKLLNGFMMKSASPARDDATDTIKTSSAIDIDPFDHKSGGAALPPPKKRQQQQHLSSIENWLFDDATEQLVVQLMEEISGGSCSVPMLLY</sequence>
<protein>
    <recommendedName>
        <fullName evidence="4">MYB transcription factor 69</fullName>
        <shortName evidence="4">ZmMYB69</shortName>
    </recommendedName>
    <alternativeName>
        <fullName evidence="5">Myb-related protein 306</fullName>
    </alternativeName>
</protein>